<comment type="function">
    <text evidence="1">Catalyzes the 1,3-allylic rearrangement of the homoallylic substrate isopentenyl (IPP) to its highly electrophilic allylic isomer, dimethylallyl diphosphate (DMAPP).</text>
</comment>
<comment type="catalytic activity">
    <reaction evidence="1">
        <text>isopentenyl diphosphate = dimethylallyl diphosphate</text>
        <dbReference type="Rhea" id="RHEA:23284"/>
        <dbReference type="ChEBI" id="CHEBI:57623"/>
        <dbReference type="ChEBI" id="CHEBI:128769"/>
        <dbReference type="EC" id="5.3.3.2"/>
    </reaction>
</comment>
<comment type="cofactor">
    <cofactor evidence="1">
        <name>Mg(2+)</name>
        <dbReference type="ChEBI" id="CHEBI:18420"/>
    </cofactor>
    <text evidence="1">Binds 1 Mg(2+) ion per subunit. The magnesium ion binds only when substrate is bound.</text>
</comment>
<comment type="cofactor">
    <cofactor evidence="1">
        <name>Mn(2+)</name>
        <dbReference type="ChEBI" id="CHEBI:29035"/>
    </cofactor>
    <text evidence="1">Binds 1 Mn(2+) ion per subunit.</text>
</comment>
<comment type="pathway">
    <text evidence="1">Isoprenoid biosynthesis; dimethylallyl diphosphate biosynthesis; dimethylallyl diphosphate from isopentenyl diphosphate: step 1/1.</text>
</comment>
<comment type="subcellular location">
    <subcellularLocation>
        <location evidence="1">Cytoplasm</location>
    </subcellularLocation>
</comment>
<comment type="similarity">
    <text evidence="1">Belongs to the IPP isomerase type 1 family.</text>
</comment>
<name>IDI_BRELN</name>
<accession>Q9KK75</accession>
<protein>
    <recommendedName>
        <fullName evidence="1">Isopentenyl-diphosphate Delta-isomerase</fullName>
        <shortName evidence="1">IPP isomerase</shortName>
        <ecNumber evidence="1">5.3.3.2</ecNumber>
    </recommendedName>
    <alternativeName>
        <fullName evidence="1">IPP:DMAPP isomerase</fullName>
    </alternativeName>
    <alternativeName>
        <fullName evidence="1">Isopentenyl pyrophosphate isomerase</fullName>
    </alternativeName>
</protein>
<gene>
    <name evidence="1" type="primary">idi</name>
</gene>
<organism>
    <name type="scientific">Brevibacterium linens</name>
    <dbReference type="NCBI Taxonomy" id="1703"/>
    <lineage>
        <taxon>Bacteria</taxon>
        <taxon>Bacillati</taxon>
        <taxon>Actinomycetota</taxon>
        <taxon>Actinomycetes</taxon>
        <taxon>Micrococcales</taxon>
        <taxon>Brevibacteriaceae</taxon>
        <taxon>Brevibacterium</taxon>
    </lineage>
</organism>
<sequence length="182" mass="19991">MEMVVLVDHAGDPIGVQSKADVHGQSTPRHLAFSCHVVDEQGRLLVTRRALKKRTWPGVWTNSFCGHPAPGETLEDAVSRRAEFELGLSIDHITCAIPNFSYVARDASGIEENEHCPVFIARAVSSLTPNPAEVAEAQWTSSSELKSAIDAAPWAFSPWLVEHFTELQPLIAEHIVEAEDDD</sequence>
<reference key="1">
    <citation type="journal article" date="2000" name="Mol. Gen. Genet.">
        <title>A carotenogenic gene cluster from Brevibacterium linens with novel lycopene cyclase genes involved in the synthesis of aromatic carotenoids.</title>
        <authorList>
            <person name="Krubasik P."/>
            <person name="Sandmann G."/>
        </authorList>
    </citation>
    <scope>NUCLEOTIDE SEQUENCE [GENOMIC DNA]</scope>
    <source>
        <strain>ATCC 9175 / DSM 20426 / NCIB 8546 / KC</strain>
    </source>
</reference>
<feature type="chain" id="PRO_0000205243" description="Isopentenyl-diphosphate Delta-isomerase">
    <location>
        <begin position="1"/>
        <end position="182"/>
    </location>
</feature>
<feature type="domain" description="Nudix hydrolase">
    <location>
        <begin position="28"/>
        <end position="162"/>
    </location>
</feature>
<feature type="active site" evidence="1">
    <location>
        <position position="65"/>
    </location>
</feature>
<feature type="active site" evidence="1">
    <location>
        <position position="114"/>
    </location>
</feature>
<feature type="binding site" evidence="1">
    <location>
        <position position="23"/>
    </location>
    <ligand>
        <name>Mn(2+)</name>
        <dbReference type="ChEBI" id="CHEBI:29035"/>
    </ligand>
</feature>
<feature type="binding site" evidence="1">
    <location>
        <position position="30"/>
    </location>
    <ligand>
        <name>Mn(2+)</name>
        <dbReference type="ChEBI" id="CHEBI:29035"/>
    </ligand>
</feature>
<feature type="binding site" evidence="1">
    <location>
        <position position="65"/>
    </location>
    <ligand>
        <name>Mg(2+)</name>
        <dbReference type="ChEBI" id="CHEBI:18420"/>
    </ligand>
</feature>
<feature type="binding site" evidence="1">
    <location>
        <position position="67"/>
    </location>
    <ligand>
        <name>Mn(2+)</name>
        <dbReference type="ChEBI" id="CHEBI:29035"/>
    </ligand>
</feature>
<feature type="binding site" evidence="1">
    <location>
        <position position="85"/>
    </location>
    <ligand>
        <name>Mg(2+)</name>
        <dbReference type="ChEBI" id="CHEBI:18420"/>
    </ligand>
</feature>
<feature type="binding site" evidence="1">
    <location>
        <position position="112"/>
    </location>
    <ligand>
        <name>Mn(2+)</name>
        <dbReference type="ChEBI" id="CHEBI:29035"/>
    </ligand>
</feature>
<feature type="binding site" evidence="1">
    <location>
        <position position="114"/>
    </location>
    <ligand>
        <name>Mn(2+)</name>
        <dbReference type="ChEBI" id="CHEBI:29035"/>
    </ligand>
</feature>
<keyword id="KW-0963">Cytoplasm</keyword>
<keyword id="KW-0413">Isomerase</keyword>
<keyword id="KW-0414">Isoprene biosynthesis</keyword>
<keyword id="KW-0460">Magnesium</keyword>
<keyword id="KW-0464">Manganese</keyword>
<keyword id="KW-0479">Metal-binding</keyword>
<dbReference type="EC" id="5.3.3.2" evidence="1"/>
<dbReference type="EMBL" id="AF139916">
    <property type="protein sequence ID" value="AAF65591.1"/>
    <property type="molecule type" value="Genomic_DNA"/>
</dbReference>
<dbReference type="PIR" id="T51128">
    <property type="entry name" value="T51128"/>
</dbReference>
<dbReference type="SMR" id="Q9KK75"/>
<dbReference type="STRING" id="1703.BLSMQ_3106"/>
<dbReference type="UniPathway" id="UPA00059">
    <property type="reaction ID" value="UER00104"/>
</dbReference>
<dbReference type="GO" id="GO:0005737">
    <property type="term" value="C:cytoplasm"/>
    <property type="evidence" value="ECO:0007669"/>
    <property type="project" value="UniProtKB-SubCell"/>
</dbReference>
<dbReference type="GO" id="GO:0004452">
    <property type="term" value="F:isopentenyl-diphosphate delta-isomerase activity"/>
    <property type="evidence" value="ECO:0007669"/>
    <property type="project" value="UniProtKB-UniRule"/>
</dbReference>
<dbReference type="GO" id="GO:0046872">
    <property type="term" value="F:metal ion binding"/>
    <property type="evidence" value="ECO:0007669"/>
    <property type="project" value="UniProtKB-KW"/>
</dbReference>
<dbReference type="GO" id="GO:0050992">
    <property type="term" value="P:dimethylallyl diphosphate biosynthetic process"/>
    <property type="evidence" value="ECO:0007669"/>
    <property type="project" value="UniProtKB-UniRule"/>
</dbReference>
<dbReference type="GO" id="GO:0008299">
    <property type="term" value="P:isoprenoid biosynthetic process"/>
    <property type="evidence" value="ECO:0007669"/>
    <property type="project" value="UniProtKB-KW"/>
</dbReference>
<dbReference type="CDD" id="cd02885">
    <property type="entry name" value="NUDIX_IPP_Isomerase"/>
    <property type="match status" value="1"/>
</dbReference>
<dbReference type="Gene3D" id="3.90.79.10">
    <property type="entry name" value="Nucleoside Triphosphate Pyrophosphohydrolase"/>
    <property type="match status" value="1"/>
</dbReference>
<dbReference type="HAMAP" id="MF_00202">
    <property type="entry name" value="Idi"/>
    <property type="match status" value="1"/>
</dbReference>
<dbReference type="InterPro" id="IPR056375">
    <property type="entry name" value="Idi_bact"/>
</dbReference>
<dbReference type="InterPro" id="IPR011876">
    <property type="entry name" value="IsopentenylPP_isomerase_typ1"/>
</dbReference>
<dbReference type="InterPro" id="IPR015797">
    <property type="entry name" value="NUDIX_hydrolase-like_dom_sf"/>
</dbReference>
<dbReference type="InterPro" id="IPR000086">
    <property type="entry name" value="NUDIX_hydrolase_dom"/>
</dbReference>
<dbReference type="NCBIfam" id="TIGR02150">
    <property type="entry name" value="IPP_isom_1"/>
    <property type="match status" value="1"/>
</dbReference>
<dbReference type="NCBIfam" id="NF002995">
    <property type="entry name" value="PRK03759.1"/>
    <property type="match status" value="1"/>
</dbReference>
<dbReference type="PANTHER" id="PTHR10885">
    <property type="entry name" value="ISOPENTENYL-DIPHOSPHATE DELTA-ISOMERASE"/>
    <property type="match status" value="1"/>
</dbReference>
<dbReference type="PANTHER" id="PTHR10885:SF0">
    <property type="entry name" value="ISOPENTENYL-DIPHOSPHATE DELTA-ISOMERASE"/>
    <property type="match status" value="1"/>
</dbReference>
<dbReference type="Pfam" id="PF00293">
    <property type="entry name" value="NUDIX"/>
    <property type="match status" value="1"/>
</dbReference>
<dbReference type="PIRSF" id="PIRSF018427">
    <property type="entry name" value="Isopntndiph_ism"/>
    <property type="match status" value="1"/>
</dbReference>
<dbReference type="SUPFAM" id="SSF55811">
    <property type="entry name" value="Nudix"/>
    <property type="match status" value="1"/>
</dbReference>
<dbReference type="PROSITE" id="PS51462">
    <property type="entry name" value="NUDIX"/>
    <property type="match status" value="1"/>
</dbReference>
<proteinExistence type="inferred from homology"/>
<evidence type="ECO:0000255" key="1">
    <source>
        <dbReference type="HAMAP-Rule" id="MF_00202"/>
    </source>
</evidence>